<sequence length="555" mass="61098">MDIKRTVLWVIFFMSAVMLYDNWQRSHGRPSMFFPSATQTAPAAAAGGASGTGATTTTAGEVPAAAAGAAPSTTAPAAQAQLVKFSTDVYDGEIDTRGGTLAKLTLKKQGDGKQPDLYITLFDHTAGHTYLARSGLLGGDFPNHNDVYTQLNPGTTSLTGDQNALKLSFESPVKGGVKVVKTYTFTRGSYVIGVDTKIDNVGTAPVTPTVYMELVRDNTAVETPMFSHTFLGPAVYTDAKHFQKINFSDLDKNKADYVTSADNGWVAMVQHYFASAWIPQQGVKRDIYAEKIDPTLYRVGVKQPVAAIAPGQSADVQARLFAGPEEERMLEGIAPGLELVKDYGWVTIIAKPLFWLLEKIHSYIGNWGWSIVLLTLLIKAVFFPLSAASYKSMARMKEITPRMQALRERFKSDPQKMNSALMELYKTEKVNPFGGCLPVVIQIPVFISLYWVLLASVEMRGAPWVLWIHDLSQRDPFFILPVLMAVSMYVQTSLNPTPPDPVQAKMMKFMPIAFSVMFFFFPAGLVLYYVVNNVLSIAQQYYITRKLGGAKKKPA</sequence>
<name>YIDC_BURL3</name>
<keyword id="KW-0997">Cell inner membrane</keyword>
<keyword id="KW-1003">Cell membrane</keyword>
<keyword id="KW-0143">Chaperone</keyword>
<keyword id="KW-0472">Membrane</keyword>
<keyword id="KW-0653">Protein transport</keyword>
<keyword id="KW-0812">Transmembrane</keyword>
<keyword id="KW-1133">Transmembrane helix</keyword>
<keyword id="KW-0813">Transport</keyword>
<comment type="function">
    <text evidence="1">Required for the insertion and/or proper folding and/or complex formation of integral membrane proteins into the membrane. Involved in integration of membrane proteins that insert both dependently and independently of the Sec translocase complex, as well as at least some lipoproteins. Aids folding of multispanning membrane proteins.</text>
</comment>
<comment type="subunit">
    <text evidence="1">Interacts with the Sec translocase complex via SecD. Specifically interacts with transmembrane segments of nascent integral membrane proteins during membrane integration.</text>
</comment>
<comment type="subcellular location">
    <subcellularLocation>
        <location evidence="1">Cell inner membrane</location>
        <topology evidence="1">Multi-pass membrane protein</topology>
    </subcellularLocation>
</comment>
<comment type="similarity">
    <text evidence="1">Belongs to the OXA1/ALB3/YidC family. Type 1 subfamily.</text>
</comment>
<proteinExistence type="inferred from homology"/>
<dbReference type="EMBL" id="CP000151">
    <property type="protein sequence ID" value="ABB10114.1"/>
    <property type="molecule type" value="Genomic_DNA"/>
</dbReference>
<dbReference type="RefSeq" id="WP_011353615.1">
    <property type="nucleotide sequence ID" value="NC_007510.1"/>
</dbReference>
<dbReference type="SMR" id="Q39BQ2"/>
<dbReference type="GeneID" id="45096389"/>
<dbReference type="KEGG" id="bur:Bcep18194_A6520"/>
<dbReference type="PATRIC" id="fig|482957.22.peg.3554"/>
<dbReference type="HOGENOM" id="CLU_016535_3_0_4"/>
<dbReference type="Proteomes" id="UP000002705">
    <property type="component" value="Chromosome 1"/>
</dbReference>
<dbReference type="GO" id="GO:0005886">
    <property type="term" value="C:plasma membrane"/>
    <property type="evidence" value="ECO:0007669"/>
    <property type="project" value="UniProtKB-SubCell"/>
</dbReference>
<dbReference type="GO" id="GO:0032977">
    <property type="term" value="F:membrane insertase activity"/>
    <property type="evidence" value="ECO:0007669"/>
    <property type="project" value="InterPro"/>
</dbReference>
<dbReference type="GO" id="GO:0051205">
    <property type="term" value="P:protein insertion into membrane"/>
    <property type="evidence" value="ECO:0007669"/>
    <property type="project" value="TreeGrafter"/>
</dbReference>
<dbReference type="GO" id="GO:0015031">
    <property type="term" value="P:protein transport"/>
    <property type="evidence" value="ECO:0007669"/>
    <property type="project" value="UniProtKB-KW"/>
</dbReference>
<dbReference type="CDD" id="cd20070">
    <property type="entry name" value="5TM_YidC_Alb3"/>
    <property type="match status" value="1"/>
</dbReference>
<dbReference type="CDD" id="cd19961">
    <property type="entry name" value="EcYidC-like_peri"/>
    <property type="match status" value="1"/>
</dbReference>
<dbReference type="Gene3D" id="2.70.98.90">
    <property type="match status" value="1"/>
</dbReference>
<dbReference type="HAMAP" id="MF_01810">
    <property type="entry name" value="YidC_type1"/>
    <property type="match status" value="1"/>
</dbReference>
<dbReference type="InterPro" id="IPR019998">
    <property type="entry name" value="Membr_insert_YidC"/>
</dbReference>
<dbReference type="InterPro" id="IPR028053">
    <property type="entry name" value="Membr_insert_YidC_N"/>
</dbReference>
<dbReference type="InterPro" id="IPR001708">
    <property type="entry name" value="YidC/ALB3/OXA1/COX18"/>
</dbReference>
<dbReference type="InterPro" id="IPR028055">
    <property type="entry name" value="YidC/Oxa/ALB_C"/>
</dbReference>
<dbReference type="InterPro" id="IPR047196">
    <property type="entry name" value="YidC_ALB_C"/>
</dbReference>
<dbReference type="InterPro" id="IPR038221">
    <property type="entry name" value="YidC_periplasmic_sf"/>
</dbReference>
<dbReference type="NCBIfam" id="NF002352">
    <property type="entry name" value="PRK01318.1-3"/>
    <property type="match status" value="1"/>
</dbReference>
<dbReference type="NCBIfam" id="NF002353">
    <property type="entry name" value="PRK01318.1-4"/>
    <property type="match status" value="1"/>
</dbReference>
<dbReference type="NCBIfam" id="TIGR03593">
    <property type="entry name" value="yidC_nterm"/>
    <property type="match status" value="1"/>
</dbReference>
<dbReference type="NCBIfam" id="TIGR03592">
    <property type="entry name" value="yidC_oxa1_cterm"/>
    <property type="match status" value="1"/>
</dbReference>
<dbReference type="PANTHER" id="PTHR12428:SF65">
    <property type="entry name" value="CYTOCHROME C OXIDASE ASSEMBLY PROTEIN COX18, MITOCHONDRIAL"/>
    <property type="match status" value="1"/>
</dbReference>
<dbReference type="PANTHER" id="PTHR12428">
    <property type="entry name" value="OXA1"/>
    <property type="match status" value="1"/>
</dbReference>
<dbReference type="Pfam" id="PF02096">
    <property type="entry name" value="60KD_IMP"/>
    <property type="match status" value="1"/>
</dbReference>
<dbReference type="Pfam" id="PF14849">
    <property type="entry name" value="YidC_periplas"/>
    <property type="match status" value="1"/>
</dbReference>
<dbReference type="PRINTS" id="PR00701">
    <property type="entry name" value="60KDINNERMP"/>
</dbReference>
<dbReference type="PRINTS" id="PR01900">
    <property type="entry name" value="YIDCPROTEIN"/>
</dbReference>
<reference key="1">
    <citation type="submission" date="2005-10" db="EMBL/GenBank/DDBJ databases">
        <title>Complete sequence of chromosome 1 of Burkholderia sp. 383.</title>
        <authorList>
            <consortium name="US DOE Joint Genome Institute"/>
            <person name="Copeland A."/>
            <person name="Lucas S."/>
            <person name="Lapidus A."/>
            <person name="Barry K."/>
            <person name="Detter J.C."/>
            <person name="Glavina T."/>
            <person name="Hammon N."/>
            <person name="Israni S."/>
            <person name="Pitluck S."/>
            <person name="Chain P."/>
            <person name="Malfatti S."/>
            <person name="Shin M."/>
            <person name="Vergez L."/>
            <person name="Schmutz J."/>
            <person name="Larimer F."/>
            <person name="Land M."/>
            <person name="Kyrpides N."/>
            <person name="Lykidis A."/>
            <person name="Richardson P."/>
        </authorList>
    </citation>
    <scope>NUCLEOTIDE SEQUENCE [LARGE SCALE GENOMIC DNA]</scope>
    <source>
        <strain>ATCC 17760 / DSM 23089 / LMG 22485 / NCIMB 9086 / R18194 / 383</strain>
    </source>
</reference>
<evidence type="ECO:0000255" key="1">
    <source>
        <dbReference type="HAMAP-Rule" id="MF_01810"/>
    </source>
</evidence>
<gene>
    <name evidence="1" type="primary">yidC</name>
    <name type="ordered locus">Bcep18194_A6520</name>
</gene>
<feature type="chain" id="PRO_1000070075" description="Membrane protein insertase YidC">
    <location>
        <begin position="1"/>
        <end position="555"/>
    </location>
</feature>
<feature type="transmembrane region" description="Helical" evidence="1">
    <location>
        <begin position="7"/>
        <end position="24"/>
    </location>
</feature>
<feature type="transmembrane region" description="Helical" evidence="1">
    <location>
        <begin position="367"/>
        <end position="387"/>
    </location>
</feature>
<feature type="transmembrane region" description="Helical" evidence="1">
    <location>
        <begin position="437"/>
        <end position="457"/>
    </location>
</feature>
<feature type="transmembrane region" description="Helical" evidence="1">
    <location>
        <begin position="476"/>
        <end position="496"/>
    </location>
</feature>
<feature type="transmembrane region" description="Helical" evidence="1">
    <location>
        <begin position="511"/>
        <end position="531"/>
    </location>
</feature>
<protein>
    <recommendedName>
        <fullName evidence="1">Membrane protein insertase YidC</fullName>
    </recommendedName>
    <alternativeName>
        <fullName evidence="1">Foldase YidC</fullName>
    </alternativeName>
    <alternativeName>
        <fullName evidence="1">Membrane integrase YidC</fullName>
    </alternativeName>
    <alternativeName>
        <fullName evidence="1">Membrane protein YidC</fullName>
    </alternativeName>
</protein>
<organism>
    <name type="scientific">Burkholderia lata (strain ATCC 17760 / DSM 23089 / LMG 22485 / NCIMB 9086 / R18194 / 383)</name>
    <dbReference type="NCBI Taxonomy" id="482957"/>
    <lineage>
        <taxon>Bacteria</taxon>
        <taxon>Pseudomonadati</taxon>
        <taxon>Pseudomonadota</taxon>
        <taxon>Betaproteobacteria</taxon>
        <taxon>Burkholderiales</taxon>
        <taxon>Burkholderiaceae</taxon>
        <taxon>Burkholderia</taxon>
        <taxon>Burkholderia cepacia complex</taxon>
    </lineage>
</organism>
<accession>Q39BQ2</accession>